<comment type="function">
    <text>May play a role in signal transduction pathways that involve calcium as a second messenger.</text>
</comment>
<comment type="catalytic activity">
    <reaction>
        <text>L-seryl-[protein] + ATP = O-phospho-L-seryl-[protein] + ADP + H(+)</text>
        <dbReference type="Rhea" id="RHEA:17989"/>
        <dbReference type="Rhea" id="RHEA-COMP:9863"/>
        <dbReference type="Rhea" id="RHEA-COMP:11604"/>
        <dbReference type="ChEBI" id="CHEBI:15378"/>
        <dbReference type="ChEBI" id="CHEBI:29999"/>
        <dbReference type="ChEBI" id="CHEBI:30616"/>
        <dbReference type="ChEBI" id="CHEBI:83421"/>
        <dbReference type="ChEBI" id="CHEBI:456216"/>
        <dbReference type="EC" id="2.7.11.1"/>
    </reaction>
</comment>
<comment type="catalytic activity">
    <reaction>
        <text>L-threonyl-[protein] + ATP = O-phospho-L-threonyl-[protein] + ADP + H(+)</text>
        <dbReference type="Rhea" id="RHEA:46608"/>
        <dbReference type="Rhea" id="RHEA-COMP:11060"/>
        <dbReference type="Rhea" id="RHEA-COMP:11605"/>
        <dbReference type="ChEBI" id="CHEBI:15378"/>
        <dbReference type="ChEBI" id="CHEBI:30013"/>
        <dbReference type="ChEBI" id="CHEBI:30616"/>
        <dbReference type="ChEBI" id="CHEBI:61977"/>
        <dbReference type="ChEBI" id="CHEBI:456216"/>
        <dbReference type="EC" id="2.7.11.1"/>
    </reaction>
</comment>
<comment type="activity regulation">
    <text evidence="1">Activated by calcium. Autophosphorylation may play an important role in the regulation of the kinase activity (By similarity).</text>
</comment>
<comment type="subcellular location">
    <subcellularLocation>
        <location evidence="7">Membrane</location>
        <topology evidence="7">Lipid-anchor</topology>
    </subcellularLocation>
</comment>
<comment type="domain">
    <text evidence="1">There are 3 contiguous domains conserved in the CDPK subfamily: a kinase domain, an autoinhibitory (junction) domain and a calmodulin-like domain. The autoinhibitory domain (295-325) inactivates kinase activity under calcium-free conditions (By similarity).</text>
</comment>
<comment type="similarity">
    <text evidence="4">Belongs to the protein kinase superfamily. Ser/Thr protein kinase family. CDPK subfamily.</text>
</comment>
<comment type="sequence caution" evidence="7">
    <conflict type="erroneous gene model prediction">
        <sequence resource="EMBL-CDS" id="AAD03451"/>
    </conflict>
</comment>
<comment type="sequence caution" evidence="7">
    <conflict type="miscellaneous discrepancy">
        <sequence resource="EMBL" id="BX841032"/>
    </conflict>
    <text>Sequencing errors.</text>
</comment>
<comment type="sequence caution" evidence="7">
    <conflict type="erroneous gene model prediction">
        <sequence resource="EMBL-CDS" id="CAB80835"/>
    </conflict>
</comment>
<protein>
    <recommendedName>
        <fullName>Calcium-dependent protein kinase 27</fullName>
        <ecNumber>2.7.11.1</ecNumber>
    </recommendedName>
</protein>
<feature type="initiator methionine" description="Removed" evidence="3">
    <location>
        <position position="1"/>
    </location>
</feature>
<feature type="chain" id="PRO_0000363349" description="Calcium-dependent protein kinase 27">
    <location>
        <begin position="2"/>
        <end position="485"/>
    </location>
</feature>
<feature type="domain" description="Protein kinase" evidence="4">
    <location>
        <begin position="28"/>
        <end position="290"/>
    </location>
</feature>
<feature type="domain" description="EF-hand 1" evidence="5">
    <location>
        <begin position="332"/>
        <end position="367"/>
    </location>
</feature>
<feature type="domain" description="EF-hand 2" evidence="5">
    <location>
        <begin position="368"/>
        <end position="403"/>
    </location>
</feature>
<feature type="domain" description="EF-hand 3" evidence="5">
    <location>
        <begin position="404"/>
        <end position="439"/>
    </location>
</feature>
<feature type="domain" description="EF-hand 4" evidence="5">
    <location>
        <begin position="444"/>
        <end position="474"/>
    </location>
</feature>
<feature type="region of interest" description="Autoinhibitory domain" evidence="1">
    <location>
        <begin position="295"/>
        <end position="325"/>
    </location>
</feature>
<feature type="active site" description="Proton acceptor" evidence="4 6">
    <location>
        <position position="156"/>
    </location>
</feature>
<feature type="binding site" evidence="4">
    <location>
        <begin position="34"/>
        <end position="42"/>
    </location>
    <ligand>
        <name>ATP</name>
        <dbReference type="ChEBI" id="CHEBI:30616"/>
    </ligand>
</feature>
<feature type="binding site" evidence="4">
    <location>
        <position position="57"/>
    </location>
    <ligand>
        <name>ATP</name>
        <dbReference type="ChEBI" id="CHEBI:30616"/>
    </ligand>
</feature>
<feature type="binding site" evidence="5">
    <location>
        <position position="345"/>
    </location>
    <ligand>
        <name>Ca(2+)</name>
        <dbReference type="ChEBI" id="CHEBI:29108"/>
        <label>1</label>
    </ligand>
</feature>
<feature type="binding site" evidence="5">
    <location>
        <position position="347"/>
    </location>
    <ligand>
        <name>Ca(2+)</name>
        <dbReference type="ChEBI" id="CHEBI:29108"/>
        <label>1</label>
    </ligand>
</feature>
<feature type="binding site" evidence="5">
    <location>
        <position position="349"/>
    </location>
    <ligand>
        <name>Ca(2+)</name>
        <dbReference type="ChEBI" id="CHEBI:29108"/>
        <label>1</label>
    </ligand>
</feature>
<feature type="binding site" evidence="5">
    <location>
        <position position="351"/>
    </location>
    <ligand>
        <name>Ca(2+)</name>
        <dbReference type="ChEBI" id="CHEBI:29108"/>
        <label>1</label>
    </ligand>
</feature>
<feature type="binding site" evidence="5">
    <location>
        <position position="356"/>
    </location>
    <ligand>
        <name>Ca(2+)</name>
        <dbReference type="ChEBI" id="CHEBI:29108"/>
        <label>1</label>
    </ligand>
</feature>
<feature type="binding site" evidence="5">
    <location>
        <position position="381"/>
    </location>
    <ligand>
        <name>Ca(2+)</name>
        <dbReference type="ChEBI" id="CHEBI:29108"/>
        <label>2</label>
    </ligand>
</feature>
<feature type="binding site" evidence="5">
    <location>
        <position position="383"/>
    </location>
    <ligand>
        <name>Ca(2+)</name>
        <dbReference type="ChEBI" id="CHEBI:29108"/>
        <label>2</label>
    </ligand>
</feature>
<feature type="binding site" evidence="5">
    <location>
        <position position="385"/>
    </location>
    <ligand>
        <name>Ca(2+)</name>
        <dbReference type="ChEBI" id="CHEBI:29108"/>
        <label>2</label>
    </ligand>
</feature>
<feature type="binding site" evidence="5">
    <location>
        <position position="387"/>
    </location>
    <ligand>
        <name>Ca(2+)</name>
        <dbReference type="ChEBI" id="CHEBI:29108"/>
        <label>2</label>
    </ligand>
</feature>
<feature type="binding site" evidence="5">
    <location>
        <position position="392"/>
    </location>
    <ligand>
        <name>Ca(2+)</name>
        <dbReference type="ChEBI" id="CHEBI:29108"/>
        <label>2</label>
    </ligand>
</feature>
<feature type="binding site" evidence="5">
    <location>
        <position position="417"/>
    </location>
    <ligand>
        <name>Ca(2+)</name>
        <dbReference type="ChEBI" id="CHEBI:29108"/>
        <label>3</label>
    </ligand>
</feature>
<feature type="binding site" evidence="5">
    <location>
        <position position="419"/>
    </location>
    <ligand>
        <name>Ca(2+)</name>
        <dbReference type="ChEBI" id="CHEBI:29108"/>
        <label>3</label>
    </ligand>
</feature>
<feature type="binding site" evidence="5">
    <location>
        <position position="421"/>
    </location>
    <ligand>
        <name>Ca(2+)</name>
        <dbReference type="ChEBI" id="CHEBI:29108"/>
        <label>3</label>
    </ligand>
</feature>
<feature type="binding site" evidence="5">
    <location>
        <position position="423"/>
    </location>
    <ligand>
        <name>Ca(2+)</name>
        <dbReference type="ChEBI" id="CHEBI:29108"/>
        <label>3</label>
    </ligand>
</feature>
<feature type="binding site" evidence="5">
    <location>
        <position position="428"/>
    </location>
    <ligand>
        <name>Ca(2+)</name>
        <dbReference type="ChEBI" id="CHEBI:29108"/>
        <label>3</label>
    </ligand>
</feature>
<feature type="binding site" evidence="5">
    <location>
        <position position="452"/>
    </location>
    <ligand>
        <name>Ca(2+)</name>
        <dbReference type="ChEBI" id="CHEBI:29108"/>
        <label>4</label>
    </ligand>
</feature>
<feature type="binding site" evidence="5">
    <location>
        <position position="454"/>
    </location>
    <ligand>
        <name>Ca(2+)</name>
        <dbReference type="ChEBI" id="CHEBI:29108"/>
        <label>4</label>
    </ligand>
</feature>
<feature type="binding site" evidence="5">
    <location>
        <position position="456"/>
    </location>
    <ligand>
        <name>Ca(2+)</name>
        <dbReference type="ChEBI" id="CHEBI:29108"/>
        <label>4</label>
    </ligand>
</feature>
<feature type="binding site" evidence="5">
    <location>
        <position position="458"/>
    </location>
    <ligand>
        <name>Ca(2+)</name>
        <dbReference type="ChEBI" id="CHEBI:29108"/>
        <label>4</label>
    </ligand>
</feature>
<feature type="binding site" evidence="5">
    <location>
        <position position="463"/>
    </location>
    <ligand>
        <name>Ca(2+)</name>
        <dbReference type="ChEBI" id="CHEBI:29108"/>
        <label>4</label>
    </ligand>
</feature>
<feature type="modified residue" description="Phosphoserine" evidence="2">
    <location>
        <position position="196"/>
    </location>
</feature>
<feature type="lipid moiety-binding region" description="N-myristoyl glycine" evidence="3">
    <location>
        <position position="2"/>
    </location>
</feature>
<accession>Q9ZSA4</accession>
<accession>Q9M103</accession>
<gene>
    <name type="primary">CPK27</name>
    <name type="ordered locus">At4g04700</name>
    <name type="ORF">T19J18.12</name>
    <name type="ORF">T4B21.11</name>
</gene>
<reference key="1">
    <citation type="journal article" date="1999" name="Nature">
        <title>Sequence and analysis of chromosome 4 of the plant Arabidopsis thaliana.</title>
        <authorList>
            <person name="Mayer K.F.X."/>
            <person name="Schueller C."/>
            <person name="Wambutt R."/>
            <person name="Murphy G."/>
            <person name="Volckaert G."/>
            <person name="Pohl T."/>
            <person name="Duesterhoeft A."/>
            <person name="Stiekema W."/>
            <person name="Entian K.-D."/>
            <person name="Terryn N."/>
            <person name="Harris B."/>
            <person name="Ansorge W."/>
            <person name="Brandt P."/>
            <person name="Grivell L.A."/>
            <person name="Rieger M."/>
            <person name="Weichselgartner M."/>
            <person name="de Simone V."/>
            <person name="Obermaier B."/>
            <person name="Mache R."/>
            <person name="Mueller M."/>
            <person name="Kreis M."/>
            <person name="Delseny M."/>
            <person name="Puigdomenech P."/>
            <person name="Watson M."/>
            <person name="Schmidtheini T."/>
            <person name="Reichert B."/>
            <person name="Portetelle D."/>
            <person name="Perez-Alonso M."/>
            <person name="Boutry M."/>
            <person name="Bancroft I."/>
            <person name="Vos P."/>
            <person name="Hoheisel J."/>
            <person name="Zimmermann W."/>
            <person name="Wedler H."/>
            <person name="Ridley P."/>
            <person name="Langham S.-A."/>
            <person name="McCullagh B."/>
            <person name="Bilham L."/>
            <person name="Robben J."/>
            <person name="van der Schueren J."/>
            <person name="Grymonprez B."/>
            <person name="Chuang Y.-J."/>
            <person name="Vandenbussche F."/>
            <person name="Braeken M."/>
            <person name="Weltjens I."/>
            <person name="Voet M."/>
            <person name="Bastiaens I."/>
            <person name="Aert R."/>
            <person name="Defoor E."/>
            <person name="Weitzenegger T."/>
            <person name="Bothe G."/>
            <person name="Ramsperger U."/>
            <person name="Hilbert H."/>
            <person name="Braun M."/>
            <person name="Holzer E."/>
            <person name="Brandt A."/>
            <person name="Peters S."/>
            <person name="van Staveren M."/>
            <person name="Dirkse W."/>
            <person name="Mooijman P."/>
            <person name="Klein Lankhorst R."/>
            <person name="Rose M."/>
            <person name="Hauf J."/>
            <person name="Koetter P."/>
            <person name="Berneiser S."/>
            <person name="Hempel S."/>
            <person name="Feldpausch M."/>
            <person name="Lamberth S."/>
            <person name="Van den Daele H."/>
            <person name="De Keyser A."/>
            <person name="Buysshaert C."/>
            <person name="Gielen J."/>
            <person name="Villarroel R."/>
            <person name="De Clercq R."/>
            <person name="van Montagu M."/>
            <person name="Rogers J."/>
            <person name="Cronin A."/>
            <person name="Quail M.A."/>
            <person name="Bray-Allen S."/>
            <person name="Clark L."/>
            <person name="Doggett J."/>
            <person name="Hall S."/>
            <person name="Kay M."/>
            <person name="Lennard N."/>
            <person name="McLay K."/>
            <person name="Mayes R."/>
            <person name="Pettett A."/>
            <person name="Rajandream M.A."/>
            <person name="Lyne M."/>
            <person name="Benes V."/>
            <person name="Rechmann S."/>
            <person name="Borkova D."/>
            <person name="Bloecker H."/>
            <person name="Scharfe M."/>
            <person name="Grimm M."/>
            <person name="Loehnert T.-H."/>
            <person name="Dose S."/>
            <person name="de Haan M."/>
            <person name="Maarse A.C."/>
            <person name="Schaefer M."/>
            <person name="Mueller-Auer S."/>
            <person name="Gabel C."/>
            <person name="Fuchs M."/>
            <person name="Fartmann B."/>
            <person name="Granderath K."/>
            <person name="Dauner D."/>
            <person name="Herzl A."/>
            <person name="Neumann S."/>
            <person name="Argiriou A."/>
            <person name="Vitale D."/>
            <person name="Liguori R."/>
            <person name="Piravandi E."/>
            <person name="Massenet O."/>
            <person name="Quigley F."/>
            <person name="Clabauld G."/>
            <person name="Muendlein A."/>
            <person name="Felber R."/>
            <person name="Schnabl S."/>
            <person name="Hiller R."/>
            <person name="Schmidt W."/>
            <person name="Lecharny A."/>
            <person name="Aubourg S."/>
            <person name="Chefdor F."/>
            <person name="Cooke R."/>
            <person name="Berger C."/>
            <person name="Monfort A."/>
            <person name="Casacuberta E."/>
            <person name="Gibbons T."/>
            <person name="Weber N."/>
            <person name="Vandenbol M."/>
            <person name="Bargues M."/>
            <person name="Terol J."/>
            <person name="Torres A."/>
            <person name="Perez-Perez A."/>
            <person name="Purnelle B."/>
            <person name="Bent E."/>
            <person name="Johnson S."/>
            <person name="Tacon D."/>
            <person name="Jesse T."/>
            <person name="Heijnen L."/>
            <person name="Schwarz S."/>
            <person name="Scholler P."/>
            <person name="Heber S."/>
            <person name="Francs P."/>
            <person name="Bielke C."/>
            <person name="Frishman D."/>
            <person name="Haase D."/>
            <person name="Lemcke K."/>
            <person name="Mewes H.-W."/>
            <person name="Stocker S."/>
            <person name="Zaccaria P."/>
            <person name="Bevan M."/>
            <person name="Wilson R.K."/>
            <person name="de la Bastide M."/>
            <person name="Habermann K."/>
            <person name="Parnell L."/>
            <person name="Dedhia N."/>
            <person name="Gnoj L."/>
            <person name="Schutz K."/>
            <person name="Huang E."/>
            <person name="Spiegel L."/>
            <person name="Sekhon M."/>
            <person name="Murray J."/>
            <person name="Sheet P."/>
            <person name="Cordes M."/>
            <person name="Abu-Threideh J."/>
            <person name="Stoneking T."/>
            <person name="Kalicki J."/>
            <person name="Graves T."/>
            <person name="Harmon G."/>
            <person name="Edwards J."/>
            <person name="Latreille P."/>
            <person name="Courtney L."/>
            <person name="Cloud J."/>
            <person name="Abbott A."/>
            <person name="Scott K."/>
            <person name="Johnson D."/>
            <person name="Minx P."/>
            <person name="Bentley D."/>
            <person name="Fulton B."/>
            <person name="Miller N."/>
            <person name="Greco T."/>
            <person name="Kemp K."/>
            <person name="Kramer J."/>
            <person name="Fulton L."/>
            <person name="Mardis E."/>
            <person name="Dante M."/>
            <person name="Pepin K."/>
            <person name="Hillier L.W."/>
            <person name="Nelson J."/>
            <person name="Spieth J."/>
            <person name="Ryan E."/>
            <person name="Andrews S."/>
            <person name="Geisel C."/>
            <person name="Layman D."/>
            <person name="Du H."/>
            <person name="Ali J."/>
            <person name="Berghoff A."/>
            <person name="Jones K."/>
            <person name="Drone K."/>
            <person name="Cotton M."/>
            <person name="Joshu C."/>
            <person name="Antonoiu B."/>
            <person name="Zidanic M."/>
            <person name="Strong C."/>
            <person name="Sun H."/>
            <person name="Lamar B."/>
            <person name="Yordan C."/>
            <person name="Ma P."/>
            <person name="Zhong J."/>
            <person name="Preston R."/>
            <person name="Vil D."/>
            <person name="Shekher M."/>
            <person name="Matero A."/>
            <person name="Shah R."/>
            <person name="Swaby I.K."/>
            <person name="O'Shaughnessy A."/>
            <person name="Rodriguez M."/>
            <person name="Hoffman J."/>
            <person name="Till S."/>
            <person name="Granat S."/>
            <person name="Shohdy N."/>
            <person name="Hasegawa A."/>
            <person name="Hameed A."/>
            <person name="Lodhi M."/>
            <person name="Johnson A."/>
            <person name="Chen E."/>
            <person name="Marra M.A."/>
            <person name="Martienssen R."/>
            <person name="McCombie W.R."/>
        </authorList>
    </citation>
    <scope>NUCLEOTIDE SEQUENCE [LARGE SCALE GENOMIC DNA]</scope>
    <source>
        <strain>cv. Columbia</strain>
    </source>
</reference>
<reference key="2">
    <citation type="journal article" date="2017" name="Plant J.">
        <title>Araport11: a complete reannotation of the Arabidopsis thaliana reference genome.</title>
        <authorList>
            <person name="Cheng C.Y."/>
            <person name="Krishnakumar V."/>
            <person name="Chan A.P."/>
            <person name="Thibaud-Nissen F."/>
            <person name="Schobel S."/>
            <person name="Town C.D."/>
        </authorList>
    </citation>
    <scope>GENOME REANNOTATION</scope>
    <source>
        <strain>cv. Columbia</strain>
    </source>
</reference>
<reference key="3">
    <citation type="journal article" date="2004" name="Genome Res.">
        <title>Whole genome sequence comparisons and 'full-length' cDNA sequences: a combined approach to evaluate and improve Arabidopsis genome annotation.</title>
        <authorList>
            <person name="Castelli V."/>
            <person name="Aury J.-M."/>
            <person name="Jaillon O."/>
            <person name="Wincker P."/>
            <person name="Clepet C."/>
            <person name="Menard M."/>
            <person name="Cruaud C."/>
            <person name="Quetier F."/>
            <person name="Scarpelli C."/>
            <person name="Schaechter V."/>
            <person name="Temple G."/>
            <person name="Caboche M."/>
            <person name="Weissenbach J."/>
            <person name="Salanoubat M."/>
        </authorList>
    </citation>
    <scope>NUCLEOTIDE SEQUENCE [LARGE SCALE MRNA] OF 4-232</scope>
    <source>
        <strain>cv. Columbia</strain>
    </source>
</reference>
<reference key="4">
    <citation type="journal article" date="2001" name="New Phytol.">
        <title>The CDPK superfamily of protein kinases.</title>
        <authorList>
            <person name="Harmon A.C."/>
            <person name="Gribskov M."/>
            <person name="Gubrium E."/>
            <person name="Harper J.F."/>
        </authorList>
    </citation>
    <scope>GENE FAMILY</scope>
    <scope>NOMENCLATURE</scope>
</reference>
<reference key="5">
    <citation type="journal article" date="2002" name="Plant Physiol.">
        <title>Calcium signaling through protein kinases. The Arabidopsis calcium-dependent protein kinase gene family.</title>
        <authorList>
            <person name="Cheng S.-H."/>
            <person name="Willmann M.R."/>
            <person name="Chen H.-C."/>
            <person name="Sheen J."/>
        </authorList>
    </citation>
    <scope>GENE FAMILY</scope>
    <scope>NOMENCLATURE</scope>
</reference>
<reference key="6">
    <citation type="journal article" date="2003" name="Plant Physiol.">
        <title>The Arabidopsis CDPK-SnRK superfamily of protein kinases.</title>
        <authorList>
            <person name="Hrabak E.M."/>
            <person name="Chan C.W.M."/>
            <person name="Gribskov M."/>
            <person name="Harper J.F."/>
            <person name="Choi J.H."/>
            <person name="Halford N."/>
            <person name="Kudla J."/>
            <person name="Luan S."/>
            <person name="Nimmo H.G."/>
            <person name="Sussman M.R."/>
            <person name="Thomas M."/>
            <person name="Walker-Simmons K."/>
            <person name="Zhu J.-K."/>
            <person name="Harmon A.C."/>
        </authorList>
    </citation>
    <scope>GENE FAMILY</scope>
    <scope>NOMENCLATURE</scope>
</reference>
<reference key="7">
    <citation type="journal article" date="2008" name="J. Proteome Res.">
        <title>Site-specific phosphorylation profiling of Arabidopsis proteins by mass spectrometry and peptide chip analysis.</title>
        <authorList>
            <person name="de la Fuente van Bentem S."/>
            <person name="Anrather D."/>
            <person name="Dohnal I."/>
            <person name="Roitinger E."/>
            <person name="Csaszar E."/>
            <person name="Joore J."/>
            <person name="Buijnink J."/>
            <person name="Carreri A."/>
            <person name="Forzani C."/>
            <person name="Lorkovic Z.J."/>
            <person name="Barta A."/>
            <person name="Lecourieux D."/>
            <person name="Verhounig A."/>
            <person name="Jonak C."/>
            <person name="Hirt H."/>
        </authorList>
    </citation>
    <scope>IDENTIFICATION BY MASS SPECTROMETRY [LARGE SCALE ANALYSIS]</scope>
    <source>
        <tissue>Root</tissue>
    </source>
</reference>
<dbReference type="EC" id="2.7.11.1"/>
<dbReference type="EMBL" id="AF118223">
    <property type="protein sequence ID" value="AAD03451.2"/>
    <property type="status" value="ALT_SEQ"/>
    <property type="molecule type" value="Genomic_DNA"/>
</dbReference>
<dbReference type="EMBL" id="AF149414">
    <property type="status" value="NOT_ANNOTATED_CDS"/>
    <property type="molecule type" value="Genomic_DNA"/>
</dbReference>
<dbReference type="EMBL" id="AL161501">
    <property type="protein sequence ID" value="CAB80835.1"/>
    <property type="status" value="ALT_SEQ"/>
    <property type="molecule type" value="Genomic_DNA"/>
</dbReference>
<dbReference type="EMBL" id="CP002687">
    <property type="protein sequence ID" value="AEE82414.1"/>
    <property type="molecule type" value="Genomic_DNA"/>
</dbReference>
<dbReference type="EMBL" id="BX841032">
    <property type="status" value="NOT_ANNOTATED_CDS"/>
    <property type="molecule type" value="mRNA"/>
</dbReference>
<dbReference type="RefSeq" id="NP_192379.2">
    <property type="nucleotide sequence ID" value="NM_116708.3"/>
</dbReference>
<dbReference type="SMR" id="Q9ZSA4"/>
<dbReference type="BioGRID" id="11116">
    <property type="interactions" value="1"/>
</dbReference>
<dbReference type="FunCoup" id="Q9ZSA4">
    <property type="interactions" value="1063"/>
</dbReference>
<dbReference type="IntAct" id="Q9ZSA4">
    <property type="interactions" value="1"/>
</dbReference>
<dbReference type="STRING" id="3702.Q9ZSA4"/>
<dbReference type="iPTMnet" id="Q9ZSA4"/>
<dbReference type="SwissPalm" id="Q9ZSA4"/>
<dbReference type="PaxDb" id="3702-AT4G04700.1"/>
<dbReference type="ProteomicsDB" id="224394"/>
<dbReference type="EnsemblPlants" id="AT4G04700.1">
    <property type="protein sequence ID" value="AT4G04700.1"/>
    <property type="gene ID" value="AT4G04700"/>
</dbReference>
<dbReference type="GeneID" id="825805"/>
<dbReference type="Gramene" id="AT4G04700.1">
    <property type="protein sequence ID" value="AT4G04700.1"/>
    <property type="gene ID" value="AT4G04700"/>
</dbReference>
<dbReference type="KEGG" id="ath:AT4G04700"/>
<dbReference type="Araport" id="AT4G04700"/>
<dbReference type="TAIR" id="AT4G04700">
    <property type="gene designation" value="CPK27"/>
</dbReference>
<dbReference type="eggNOG" id="KOG0032">
    <property type="taxonomic scope" value="Eukaryota"/>
</dbReference>
<dbReference type="HOGENOM" id="CLU_000288_37_3_1"/>
<dbReference type="InParanoid" id="Q9ZSA4"/>
<dbReference type="PhylomeDB" id="Q9ZSA4"/>
<dbReference type="PRO" id="PR:Q9ZSA4"/>
<dbReference type="Proteomes" id="UP000006548">
    <property type="component" value="Chromosome 4"/>
</dbReference>
<dbReference type="ExpressionAtlas" id="Q9ZSA4">
    <property type="expression patterns" value="baseline and differential"/>
</dbReference>
<dbReference type="GO" id="GO:0005886">
    <property type="term" value="C:plasma membrane"/>
    <property type="evidence" value="ECO:0007005"/>
    <property type="project" value="TAIR"/>
</dbReference>
<dbReference type="GO" id="GO:0005524">
    <property type="term" value="F:ATP binding"/>
    <property type="evidence" value="ECO:0007669"/>
    <property type="project" value="UniProtKB-KW"/>
</dbReference>
<dbReference type="GO" id="GO:0005509">
    <property type="term" value="F:calcium ion binding"/>
    <property type="evidence" value="ECO:0007669"/>
    <property type="project" value="InterPro"/>
</dbReference>
<dbReference type="GO" id="GO:0106310">
    <property type="term" value="F:protein serine kinase activity"/>
    <property type="evidence" value="ECO:0007669"/>
    <property type="project" value="RHEA"/>
</dbReference>
<dbReference type="GO" id="GO:0004674">
    <property type="term" value="F:protein serine/threonine kinase activity"/>
    <property type="evidence" value="ECO:0007669"/>
    <property type="project" value="UniProtKB-KW"/>
</dbReference>
<dbReference type="CDD" id="cd05117">
    <property type="entry name" value="STKc_CAMK"/>
    <property type="match status" value="1"/>
</dbReference>
<dbReference type="FunFam" id="1.10.238.10:FF:000015">
    <property type="entry name" value="Calcium-dependent protein kinase 1"/>
    <property type="match status" value="1"/>
</dbReference>
<dbReference type="FunFam" id="1.10.510.10:FF:001411">
    <property type="entry name" value="Calcium-dependent protein kinase 27"/>
    <property type="match status" value="1"/>
</dbReference>
<dbReference type="FunFam" id="3.30.200.20:FF:001210">
    <property type="entry name" value="Calcium-dependent protein kinase 31"/>
    <property type="match status" value="1"/>
</dbReference>
<dbReference type="Gene3D" id="1.10.238.10">
    <property type="entry name" value="EF-hand"/>
    <property type="match status" value="1"/>
</dbReference>
<dbReference type="Gene3D" id="3.30.200.20">
    <property type="entry name" value="Phosphorylase Kinase, domain 1"/>
    <property type="match status" value="1"/>
</dbReference>
<dbReference type="Gene3D" id="1.10.510.10">
    <property type="entry name" value="Transferase(Phosphotransferase) domain 1"/>
    <property type="match status" value="1"/>
</dbReference>
<dbReference type="InterPro" id="IPR050205">
    <property type="entry name" value="CDPK_Ser/Thr_kinases"/>
</dbReference>
<dbReference type="InterPro" id="IPR011992">
    <property type="entry name" value="EF-hand-dom_pair"/>
</dbReference>
<dbReference type="InterPro" id="IPR018247">
    <property type="entry name" value="EF_Hand_1_Ca_BS"/>
</dbReference>
<dbReference type="InterPro" id="IPR002048">
    <property type="entry name" value="EF_hand_dom"/>
</dbReference>
<dbReference type="InterPro" id="IPR011009">
    <property type="entry name" value="Kinase-like_dom_sf"/>
</dbReference>
<dbReference type="InterPro" id="IPR000719">
    <property type="entry name" value="Prot_kinase_dom"/>
</dbReference>
<dbReference type="InterPro" id="IPR017441">
    <property type="entry name" value="Protein_kinase_ATP_BS"/>
</dbReference>
<dbReference type="InterPro" id="IPR008271">
    <property type="entry name" value="Ser/Thr_kinase_AS"/>
</dbReference>
<dbReference type="PANTHER" id="PTHR24349">
    <property type="entry name" value="SERINE/THREONINE-PROTEIN KINASE"/>
    <property type="match status" value="1"/>
</dbReference>
<dbReference type="Pfam" id="PF13499">
    <property type="entry name" value="EF-hand_7"/>
    <property type="match status" value="2"/>
</dbReference>
<dbReference type="Pfam" id="PF00069">
    <property type="entry name" value="Pkinase"/>
    <property type="match status" value="1"/>
</dbReference>
<dbReference type="SMART" id="SM00054">
    <property type="entry name" value="EFh"/>
    <property type="match status" value="4"/>
</dbReference>
<dbReference type="SMART" id="SM00220">
    <property type="entry name" value="S_TKc"/>
    <property type="match status" value="1"/>
</dbReference>
<dbReference type="SUPFAM" id="SSF47473">
    <property type="entry name" value="EF-hand"/>
    <property type="match status" value="1"/>
</dbReference>
<dbReference type="SUPFAM" id="SSF56112">
    <property type="entry name" value="Protein kinase-like (PK-like)"/>
    <property type="match status" value="1"/>
</dbReference>
<dbReference type="PROSITE" id="PS00018">
    <property type="entry name" value="EF_HAND_1"/>
    <property type="match status" value="4"/>
</dbReference>
<dbReference type="PROSITE" id="PS50222">
    <property type="entry name" value="EF_HAND_2"/>
    <property type="match status" value="4"/>
</dbReference>
<dbReference type="PROSITE" id="PS00107">
    <property type="entry name" value="PROTEIN_KINASE_ATP"/>
    <property type="match status" value="1"/>
</dbReference>
<dbReference type="PROSITE" id="PS50011">
    <property type="entry name" value="PROTEIN_KINASE_DOM"/>
    <property type="match status" value="1"/>
</dbReference>
<dbReference type="PROSITE" id="PS00108">
    <property type="entry name" value="PROTEIN_KINASE_ST"/>
    <property type="match status" value="1"/>
</dbReference>
<name>CDPKR_ARATH</name>
<evidence type="ECO:0000250" key="1"/>
<evidence type="ECO:0000250" key="2">
    <source>
        <dbReference type="UniProtKB" id="Q9FKW4"/>
    </source>
</evidence>
<evidence type="ECO:0000255" key="3"/>
<evidence type="ECO:0000255" key="4">
    <source>
        <dbReference type="PROSITE-ProRule" id="PRU00159"/>
    </source>
</evidence>
<evidence type="ECO:0000255" key="5">
    <source>
        <dbReference type="PROSITE-ProRule" id="PRU00448"/>
    </source>
</evidence>
<evidence type="ECO:0000255" key="6">
    <source>
        <dbReference type="PROSITE-ProRule" id="PRU10027"/>
    </source>
</evidence>
<evidence type="ECO:0000305" key="7"/>
<organism>
    <name type="scientific">Arabidopsis thaliana</name>
    <name type="common">Mouse-ear cress</name>
    <dbReference type="NCBI Taxonomy" id="3702"/>
    <lineage>
        <taxon>Eukaryota</taxon>
        <taxon>Viridiplantae</taxon>
        <taxon>Streptophyta</taxon>
        <taxon>Embryophyta</taxon>
        <taxon>Tracheophyta</taxon>
        <taxon>Spermatophyta</taxon>
        <taxon>Magnoliopsida</taxon>
        <taxon>eudicotyledons</taxon>
        <taxon>Gunneridae</taxon>
        <taxon>Pentapetalae</taxon>
        <taxon>rosids</taxon>
        <taxon>malvids</taxon>
        <taxon>Brassicales</taxon>
        <taxon>Brassicaceae</taxon>
        <taxon>Camelineae</taxon>
        <taxon>Arabidopsis</taxon>
    </lineage>
</organism>
<keyword id="KW-0067">ATP-binding</keyword>
<keyword id="KW-0106">Calcium</keyword>
<keyword id="KW-0418">Kinase</keyword>
<keyword id="KW-0449">Lipoprotein</keyword>
<keyword id="KW-0472">Membrane</keyword>
<keyword id="KW-0479">Metal-binding</keyword>
<keyword id="KW-0519">Myristate</keyword>
<keyword id="KW-0547">Nucleotide-binding</keyword>
<keyword id="KW-0597">Phosphoprotein</keyword>
<keyword id="KW-1185">Reference proteome</keyword>
<keyword id="KW-0677">Repeat</keyword>
<keyword id="KW-0723">Serine/threonine-protein kinase</keyword>
<keyword id="KW-0808">Transferase</keyword>
<sequence>MGCFSSKELQQSKRTILEKPLVDITKIYILGEELGRGNFGLTRKCVEKSTGKTFACKTILKTKLKDEECEEDVKREIRIMKQLSGEPNIVEFKNAYEDKDSVHIVMEYCGGGELYDKILALYDVGKSYSEKEAAGIIRSIVNVVKNCHYMGVMHRDLKPENFLLTSNDDNATVKVIDFGCSVFIEEGKVYQDLAGSDYYIAPEVLQGNYGKEADIWSAGIILYILLCGKSPFVKEPEGQMFNEIKSLEIDYSEEPWPLRDSRAIHLVKRMLDRNPKERISAAEVLGHPWMKEGEASDKPIDGVVLSRLKRFRDANKFKKVVLKFIAANLSEEEIKGLKTLFTNIDTDKSGNITLEELKTGLTRLGSNLSKTEVEQLMEAADMDGNGTIDIDEFISATMHRYKLDRDEHVYKAFQHFDKDNDGHITKEELEMAMKEDGAGDEGSIKQIIADADTDNDGKINFEEFRTMMRTESSLQPEGELLPIIN</sequence>
<proteinExistence type="evidence at protein level"/>